<comment type="function">
    <text evidence="1">Catalyzes the NADPH-dependent reduction of 7-cyano-7-deazaguanine (preQ0) to 7-aminomethyl-7-deazaguanine (preQ1).</text>
</comment>
<comment type="catalytic activity">
    <reaction evidence="1">
        <text>7-aminomethyl-7-carbaguanine + 2 NADP(+) = 7-cyano-7-deazaguanine + 2 NADPH + 3 H(+)</text>
        <dbReference type="Rhea" id="RHEA:13409"/>
        <dbReference type="ChEBI" id="CHEBI:15378"/>
        <dbReference type="ChEBI" id="CHEBI:45075"/>
        <dbReference type="ChEBI" id="CHEBI:57783"/>
        <dbReference type="ChEBI" id="CHEBI:58349"/>
        <dbReference type="ChEBI" id="CHEBI:58703"/>
        <dbReference type="EC" id="1.7.1.13"/>
    </reaction>
</comment>
<comment type="pathway">
    <text evidence="1">tRNA modification; tRNA-queuosine biosynthesis.</text>
</comment>
<comment type="subcellular location">
    <subcellularLocation>
        <location evidence="1">Cytoplasm</location>
    </subcellularLocation>
</comment>
<comment type="similarity">
    <text evidence="1">Belongs to the GTP cyclohydrolase I family. QueF type 1 subfamily.</text>
</comment>
<proteinExistence type="inferred from homology"/>
<organism>
    <name type="scientific">Staphylococcus aureus (strain COL)</name>
    <dbReference type="NCBI Taxonomy" id="93062"/>
    <lineage>
        <taxon>Bacteria</taxon>
        <taxon>Bacillati</taxon>
        <taxon>Bacillota</taxon>
        <taxon>Bacilli</taxon>
        <taxon>Bacillales</taxon>
        <taxon>Staphylococcaceae</taxon>
        <taxon>Staphylococcus</taxon>
    </lineage>
</organism>
<gene>
    <name evidence="1" type="primary">queF</name>
    <name type="ordered locus">SACOL0789</name>
</gene>
<evidence type="ECO:0000255" key="1">
    <source>
        <dbReference type="HAMAP-Rule" id="MF_00818"/>
    </source>
</evidence>
<protein>
    <recommendedName>
        <fullName evidence="1">NADPH-dependent 7-cyano-7-deazaguanine reductase</fullName>
        <ecNumber evidence="1">1.7.1.13</ecNumber>
    </recommendedName>
    <alternativeName>
        <fullName evidence="1">7-cyano-7-carbaguanine reductase</fullName>
    </alternativeName>
    <alternativeName>
        <fullName evidence="1">NADPH-dependent nitrile oxidoreductase</fullName>
    </alternativeName>
    <alternativeName>
        <fullName evidence="1">PreQ(0) reductase</fullName>
    </alternativeName>
</protein>
<reference key="1">
    <citation type="journal article" date="2005" name="J. Bacteriol.">
        <title>Insights on evolution of virulence and resistance from the complete genome analysis of an early methicillin-resistant Staphylococcus aureus strain and a biofilm-producing methicillin-resistant Staphylococcus epidermidis strain.</title>
        <authorList>
            <person name="Gill S.R."/>
            <person name="Fouts D.E."/>
            <person name="Archer G.L."/>
            <person name="Mongodin E.F."/>
            <person name="DeBoy R.T."/>
            <person name="Ravel J."/>
            <person name="Paulsen I.T."/>
            <person name="Kolonay J.F."/>
            <person name="Brinkac L.M."/>
            <person name="Beanan M.J."/>
            <person name="Dodson R.J."/>
            <person name="Daugherty S.C."/>
            <person name="Madupu R."/>
            <person name="Angiuoli S.V."/>
            <person name="Durkin A.S."/>
            <person name="Haft D.H."/>
            <person name="Vamathevan J.J."/>
            <person name="Khouri H."/>
            <person name="Utterback T.R."/>
            <person name="Lee C."/>
            <person name="Dimitrov G."/>
            <person name="Jiang L."/>
            <person name="Qin H."/>
            <person name="Weidman J."/>
            <person name="Tran K."/>
            <person name="Kang K.H."/>
            <person name="Hance I.R."/>
            <person name="Nelson K.E."/>
            <person name="Fraser C.M."/>
        </authorList>
    </citation>
    <scope>NUCLEOTIDE SEQUENCE [LARGE SCALE GENOMIC DNA]</scope>
    <source>
        <strain>COL</strain>
    </source>
</reference>
<name>QUEF_STAAC</name>
<keyword id="KW-0963">Cytoplasm</keyword>
<keyword id="KW-0521">NADP</keyword>
<keyword id="KW-0560">Oxidoreductase</keyword>
<keyword id="KW-0671">Queuosine biosynthesis</keyword>
<dbReference type="EC" id="1.7.1.13" evidence="1"/>
<dbReference type="EMBL" id="CP000046">
    <property type="protein sequence ID" value="AAW37845.1"/>
    <property type="molecule type" value="Genomic_DNA"/>
</dbReference>
<dbReference type="RefSeq" id="WP_000930014.1">
    <property type="nucleotide sequence ID" value="NZ_JBGOFO010000005.1"/>
</dbReference>
<dbReference type="SMR" id="Q5HHU4"/>
<dbReference type="KEGG" id="sac:SACOL0789"/>
<dbReference type="HOGENOM" id="CLU_102489_0_1_9"/>
<dbReference type="UniPathway" id="UPA00392"/>
<dbReference type="Proteomes" id="UP000000530">
    <property type="component" value="Chromosome"/>
</dbReference>
<dbReference type="GO" id="GO:0005737">
    <property type="term" value="C:cytoplasm"/>
    <property type="evidence" value="ECO:0007669"/>
    <property type="project" value="UniProtKB-SubCell"/>
</dbReference>
<dbReference type="GO" id="GO:0033739">
    <property type="term" value="F:preQ1 synthase activity"/>
    <property type="evidence" value="ECO:0007669"/>
    <property type="project" value="UniProtKB-UniRule"/>
</dbReference>
<dbReference type="GO" id="GO:0008616">
    <property type="term" value="P:queuosine biosynthetic process"/>
    <property type="evidence" value="ECO:0007669"/>
    <property type="project" value="UniProtKB-UniRule"/>
</dbReference>
<dbReference type="GO" id="GO:0006400">
    <property type="term" value="P:tRNA modification"/>
    <property type="evidence" value="ECO:0007669"/>
    <property type="project" value="UniProtKB-UniRule"/>
</dbReference>
<dbReference type="Gene3D" id="3.30.1130.10">
    <property type="match status" value="1"/>
</dbReference>
<dbReference type="HAMAP" id="MF_00818">
    <property type="entry name" value="QueF_type1"/>
    <property type="match status" value="1"/>
</dbReference>
<dbReference type="InterPro" id="IPR043133">
    <property type="entry name" value="GTP-CH-I_C/QueF"/>
</dbReference>
<dbReference type="InterPro" id="IPR050084">
    <property type="entry name" value="NADPH_dep_7-cyano-7-deazaG_red"/>
</dbReference>
<dbReference type="InterPro" id="IPR029500">
    <property type="entry name" value="QueF"/>
</dbReference>
<dbReference type="InterPro" id="IPR016856">
    <property type="entry name" value="QueF_type1"/>
</dbReference>
<dbReference type="NCBIfam" id="TIGR03139">
    <property type="entry name" value="QueF-II"/>
    <property type="match status" value="1"/>
</dbReference>
<dbReference type="PANTHER" id="PTHR34354">
    <property type="entry name" value="NADPH-DEPENDENT 7-CYANO-7-DEAZAGUANINE REDUCTASE"/>
    <property type="match status" value="1"/>
</dbReference>
<dbReference type="PANTHER" id="PTHR34354:SF1">
    <property type="entry name" value="NADPH-DEPENDENT 7-CYANO-7-DEAZAGUANINE REDUCTASE"/>
    <property type="match status" value="1"/>
</dbReference>
<dbReference type="Pfam" id="PF14489">
    <property type="entry name" value="QueF"/>
    <property type="match status" value="1"/>
</dbReference>
<dbReference type="PIRSF" id="PIRSF027377">
    <property type="entry name" value="Nitrile_oxidored_QueF"/>
    <property type="match status" value="1"/>
</dbReference>
<dbReference type="SUPFAM" id="SSF55620">
    <property type="entry name" value="Tetrahydrobiopterin biosynthesis enzymes-like"/>
    <property type="match status" value="1"/>
</dbReference>
<accession>Q5HHU4</accession>
<sequence>MAHGRQQDELQDITLLGNQDNTYNFDYRPDVLESFDNKHQGRDYFVKFNCPEFTSLCPITGQPDFATIYISYIPNVKMVESKSLKLYLFSFRNHGDFHEDCMNIIMNDLIELMDPHYIEVWGKFTPRGGISIDPYTNYGRPNSKYEKMAEHRLMNHDLYPEKIDNR</sequence>
<feature type="chain" id="PRO_0000162994" description="NADPH-dependent 7-cyano-7-deazaguanine reductase">
    <location>
        <begin position="1"/>
        <end position="166"/>
    </location>
</feature>
<feature type="active site" description="Thioimide intermediate" evidence="1">
    <location>
        <position position="57"/>
    </location>
</feature>
<feature type="active site" description="Proton donor" evidence="1">
    <location>
        <position position="64"/>
    </location>
</feature>
<feature type="binding site" evidence="1">
    <location>
        <begin position="79"/>
        <end position="81"/>
    </location>
    <ligand>
        <name>substrate</name>
    </ligand>
</feature>
<feature type="binding site" evidence="1">
    <location>
        <begin position="98"/>
        <end position="99"/>
    </location>
    <ligand>
        <name>substrate</name>
    </ligand>
</feature>